<accession>A6TGJ0</accession>
<keyword id="KW-0408">Iron</keyword>
<keyword id="KW-0479">Metal-binding</keyword>
<evidence type="ECO:0000255" key="1">
    <source>
        <dbReference type="HAMAP-Rule" id="MF_00142"/>
    </source>
</evidence>
<reference key="1">
    <citation type="submission" date="2006-09" db="EMBL/GenBank/DDBJ databases">
        <authorList>
            <consortium name="The Klebsiella pneumonia Genome Sequencing Project"/>
            <person name="McClelland M."/>
            <person name="Sanderson E.K."/>
            <person name="Spieth J."/>
            <person name="Clifton W.S."/>
            <person name="Latreille P."/>
            <person name="Sabo A."/>
            <person name="Pepin K."/>
            <person name="Bhonagiri V."/>
            <person name="Porwollik S."/>
            <person name="Ali J."/>
            <person name="Wilson R.K."/>
        </authorList>
    </citation>
    <scope>NUCLEOTIDE SEQUENCE [LARGE SCALE GENOMIC DNA]</scope>
    <source>
        <strain>ATCC 700721 / MGH 78578</strain>
    </source>
</reference>
<sequence length="106" mass="12221">MNDSEFHRLADSLWMTIEERLDDWDGDSDIDCEINGGVLTISFENGSKIIINRQEPLHQVWLATKQGGYHFDLKGDEWICDRSGETFWDLLEQAASQQAGETVKFR</sequence>
<organism>
    <name type="scientific">Klebsiella pneumoniae subsp. pneumoniae (strain ATCC 700721 / MGH 78578)</name>
    <dbReference type="NCBI Taxonomy" id="272620"/>
    <lineage>
        <taxon>Bacteria</taxon>
        <taxon>Pseudomonadati</taxon>
        <taxon>Pseudomonadota</taxon>
        <taxon>Gammaproteobacteria</taxon>
        <taxon>Enterobacterales</taxon>
        <taxon>Enterobacteriaceae</taxon>
        <taxon>Klebsiella/Raoultella group</taxon>
        <taxon>Klebsiella</taxon>
        <taxon>Klebsiella pneumoniae complex</taxon>
    </lineage>
</organism>
<feature type="chain" id="PRO_1000010934" description="Iron-sulfur cluster assembly protein CyaY">
    <location>
        <begin position="1"/>
        <end position="106"/>
    </location>
</feature>
<name>CYAY_KLEP7</name>
<protein>
    <recommendedName>
        <fullName evidence="1">Iron-sulfur cluster assembly protein CyaY</fullName>
    </recommendedName>
</protein>
<proteinExistence type="inferred from homology"/>
<dbReference type="EMBL" id="CP000647">
    <property type="protein sequence ID" value="ABR79674.1"/>
    <property type="molecule type" value="Genomic_DNA"/>
</dbReference>
<dbReference type="RefSeq" id="WP_002883389.1">
    <property type="nucleotide sequence ID" value="NC_009648.1"/>
</dbReference>
<dbReference type="SMR" id="A6TGJ0"/>
<dbReference type="STRING" id="272620.KPN_04306"/>
<dbReference type="jPOST" id="A6TGJ0"/>
<dbReference type="PaxDb" id="272620-KPN_04306"/>
<dbReference type="EnsemblBacteria" id="ABR79674">
    <property type="protein sequence ID" value="ABR79674"/>
    <property type="gene ID" value="KPN_04306"/>
</dbReference>
<dbReference type="GeneID" id="93275687"/>
<dbReference type="KEGG" id="kpn:KPN_04306"/>
<dbReference type="HOGENOM" id="CLU_080880_3_0_6"/>
<dbReference type="Proteomes" id="UP000000265">
    <property type="component" value="Chromosome"/>
</dbReference>
<dbReference type="GO" id="GO:0005829">
    <property type="term" value="C:cytosol"/>
    <property type="evidence" value="ECO:0007669"/>
    <property type="project" value="TreeGrafter"/>
</dbReference>
<dbReference type="GO" id="GO:0008199">
    <property type="term" value="F:ferric iron binding"/>
    <property type="evidence" value="ECO:0007669"/>
    <property type="project" value="InterPro"/>
</dbReference>
<dbReference type="GO" id="GO:0008198">
    <property type="term" value="F:ferrous iron binding"/>
    <property type="evidence" value="ECO:0007669"/>
    <property type="project" value="TreeGrafter"/>
</dbReference>
<dbReference type="GO" id="GO:0016226">
    <property type="term" value="P:iron-sulfur cluster assembly"/>
    <property type="evidence" value="ECO:0007669"/>
    <property type="project" value="UniProtKB-UniRule"/>
</dbReference>
<dbReference type="CDD" id="cd00503">
    <property type="entry name" value="Frataxin"/>
    <property type="match status" value="1"/>
</dbReference>
<dbReference type="FunFam" id="3.30.920.10:FF:000001">
    <property type="entry name" value="Iron-sulfur cluster assembly protein CyaY"/>
    <property type="match status" value="1"/>
</dbReference>
<dbReference type="Gene3D" id="3.30.920.10">
    <property type="entry name" value="Frataxin/CyaY"/>
    <property type="match status" value="1"/>
</dbReference>
<dbReference type="HAMAP" id="MF_00142">
    <property type="entry name" value="CyaY"/>
    <property type="match status" value="1"/>
</dbReference>
<dbReference type="InterPro" id="IPR047584">
    <property type="entry name" value="CyaY"/>
</dbReference>
<dbReference type="InterPro" id="IPR002908">
    <property type="entry name" value="Frataxin/CyaY"/>
</dbReference>
<dbReference type="InterPro" id="IPR036524">
    <property type="entry name" value="Frataxin/CyaY_sf"/>
</dbReference>
<dbReference type="InterPro" id="IPR020895">
    <property type="entry name" value="Frataxin_CS"/>
</dbReference>
<dbReference type="NCBIfam" id="TIGR03421">
    <property type="entry name" value="FeS_CyaY"/>
    <property type="match status" value="1"/>
</dbReference>
<dbReference type="PANTHER" id="PTHR16821">
    <property type="entry name" value="FRATAXIN"/>
    <property type="match status" value="1"/>
</dbReference>
<dbReference type="PANTHER" id="PTHR16821:SF2">
    <property type="entry name" value="FRATAXIN, MITOCHONDRIAL"/>
    <property type="match status" value="1"/>
</dbReference>
<dbReference type="Pfam" id="PF01491">
    <property type="entry name" value="Frataxin_Cyay"/>
    <property type="match status" value="1"/>
</dbReference>
<dbReference type="SMART" id="SM01219">
    <property type="entry name" value="Frataxin_Cyay"/>
    <property type="match status" value="1"/>
</dbReference>
<dbReference type="SUPFAM" id="SSF55387">
    <property type="entry name" value="Frataxin/Nqo15-like"/>
    <property type="match status" value="1"/>
</dbReference>
<dbReference type="PROSITE" id="PS01344">
    <property type="entry name" value="FRATAXIN_1"/>
    <property type="match status" value="1"/>
</dbReference>
<dbReference type="PROSITE" id="PS50810">
    <property type="entry name" value="FRATAXIN_2"/>
    <property type="match status" value="1"/>
</dbReference>
<gene>
    <name evidence="1" type="primary">cyaY</name>
    <name type="ordered locus">KPN78578_42500</name>
    <name type="ORF">KPN_04306</name>
</gene>
<comment type="function">
    <text evidence="1">Involved in iron-sulfur (Fe-S) cluster assembly. May act as a regulator of Fe-S biogenesis.</text>
</comment>
<comment type="similarity">
    <text evidence="1">Belongs to the frataxin family.</text>
</comment>